<reference key="1">
    <citation type="journal article" date="2001" name="Genomics">
        <title>SH3GLB, a new endophilin-related protein family featuring an SH3 domain.</title>
        <authorList>
            <person name="Pierrat B."/>
            <person name="Simonen M."/>
            <person name="Cueto M."/>
            <person name="Mestan J."/>
            <person name="Ferrigno P."/>
            <person name="Heim J."/>
        </authorList>
    </citation>
    <scope>NUCLEOTIDE SEQUENCE [MRNA] (ISOFORM 1)</scope>
    <scope>TISSUE SPECIFICITY</scope>
    <scope>SUBCELLULAR LOCATION</scope>
    <scope>HOMODIMERIZATION</scope>
    <scope>INTERACTION WITH SH3GLB1</scope>
    <source>
        <tissue>Adipocyte</tissue>
        <tissue>Skeletal muscle</tissue>
    </source>
</reference>
<reference key="2">
    <citation type="journal article" date="2001" name="DNA Res.">
        <title>Prediction of the coding sequences of unidentified human genes. XX. The complete sequences of 100 new cDNA clones from brain which code for large proteins in vitro.</title>
        <authorList>
            <person name="Nagase T."/>
            <person name="Nakayama M."/>
            <person name="Nakajima D."/>
            <person name="Kikuno R."/>
            <person name="Ohara O."/>
        </authorList>
    </citation>
    <scope>NUCLEOTIDE SEQUENCE [LARGE SCALE MRNA] (ISOFORM 2)</scope>
    <source>
        <tissue>Brain</tissue>
    </source>
</reference>
<reference key="3">
    <citation type="journal article" date="2004" name="Proc. Natl. Acad. Sci. U.S.A.">
        <title>Large-scale cDNA transfection screening for genes related to cancer development and progression.</title>
        <authorList>
            <person name="Wan D."/>
            <person name="Gong Y."/>
            <person name="Qin W."/>
            <person name="Zhang P."/>
            <person name="Li J."/>
            <person name="Wei L."/>
            <person name="Zhou X."/>
            <person name="Li H."/>
            <person name="Qiu X."/>
            <person name="Zhong F."/>
            <person name="He L."/>
            <person name="Yu J."/>
            <person name="Yao G."/>
            <person name="Jiang H."/>
            <person name="Qian L."/>
            <person name="Yu Y."/>
            <person name="Shu H."/>
            <person name="Chen X."/>
            <person name="Xu H."/>
            <person name="Guo M."/>
            <person name="Pan Z."/>
            <person name="Chen Y."/>
            <person name="Ge C."/>
            <person name="Yang S."/>
            <person name="Gu J."/>
        </authorList>
    </citation>
    <scope>NUCLEOTIDE SEQUENCE [LARGE SCALE MRNA] (ISOFORM 1)</scope>
</reference>
<reference key="4">
    <citation type="journal article" date="2004" name="Nature">
        <title>DNA sequence and analysis of human chromosome 9.</title>
        <authorList>
            <person name="Humphray S.J."/>
            <person name="Oliver K."/>
            <person name="Hunt A.R."/>
            <person name="Plumb R.W."/>
            <person name="Loveland J.E."/>
            <person name="Howe K.L."/>
            <person name="Andrews T.D."/>
            <person name="Searle S."/>
            <person name="Hunt S.E."/>
            <person name="Scott C.E."/>
            <person name="Jones M.C."/>
            <person name="Ainscough R."/>
            <person name="Almeida J.P."/>
            <person name="Ambrose K.D."/>
            <person name="Ashwell R.I.S."/>
            <person name="Babbage A.K."/>
            <person name="Babbage S."/>
            <person name="Bagguley C.L."/>
            <person name="Bailey J."/>
            <person name="Banerjee R."/>
            <person name="Barker D.J."/>
            <person name="Barlow K.F."/>
            <person name="Bates K."/>
            <person name="Beasley H."/>
            <person name="Beasley O."/>
            <person name="Bird C.P."/>
            <person name="Bray-Allen S."/>
            <person name="Brown A.J."/>
            <person name="Brown J.Y."/>
            <person name="Burford D."/>
            <person name="Burrill W."/>
            <person name="Burton J."/>
            <person name="Carder C."/>
            <person name="Carter N.P."/>
            <person name="Chapman J.C."/>
            <person name="Chen Y."/>
            <person name="Clarke G."/>
            <person name="Clark S.Y."/>
            <person name="Clee C.M."/>
            <person name="Clegg S."/>
            <person name="Collier R.E."/>
            <person name="Corby N."/>
            <person name="Crosier M."/>
            <person name="Cummings A.T."/>
            <person name="Davies J."/>
            <person name="Dhami P."/>
            <person name="Dunn M."/>
            <person name="Dutta I."/>
            <person name="Dyer L.W."/>
            <person name="Earthrowl M.E."/>
            <person name="Faulkner L."/>
            <person name="Fleming C.J."/>
            <person name="Frankish A."/>
            <person name="Frankland J.A."/>
            <person name="French L."/>
            <person name="Fricker D.G."/>
            <person name="Garner P."/>
            <person name="Garnett J."/>
            <person name="Ghori J."/>
            <person name="Gilbert J.G.R."/>
            <person name="Glison C."/>
            <person name="Grafham D.V."/>
            <person name="Gribble S."/>
            <person name="Griffiths C."/>
            <person name="Griffiths-Jones S."/>
            <person name="Grocock R."/>
            <person name="Guy J."/>
            <person name="Hall R.E."/>
            <person name="Hammond S."/>
            <person name="Harley J.L."/>
            <person name="Harrison E.S.I."/>
            <person name="Hart E.A."/>
            <person name="Heath P.D."/>
            <person name="Henderson C.D."/>
            <person name="Hopkins B.L."/>
            <person name="Howard P.J."/>
            <person name="Howden P.J."/>
            <person name="Huckle E."/>
            <person name="Johnson C."/>
            <person name="Johnson D."/>
            <person name="Joy A.A."/>
            <person name="Kay M."/>
            <person name="Keenan S."/>
            <person name="Kershaw J.K."/>
            <person name="Kimberley A.M."/>
            <person name="King A."/>
            <person name="Knights A."/>
            <person name="Laird G.K."/>
            <person name="Langford C."/>
            <person name="Lawlor S."/>
            <person name="Leongamornlert D.A."/>
            <person name="Leversha M."/>
            <person name="Lloyd C."/>
            <person name="Lloyd D.M."/>
            <person name="Lovell J."/>
            <person name="Martin S."/>
            <person name="Mashreghi-Mohammadi M."/>
            <person name="Matthews L."/>
            <person name="McLaren S."/>
            <person name="McLay K.E."/>
            <person name="McMurray A."/>
            <person name="Milne S."/>
            <person name="Nickerson T."/>
            <person name="Nisbett J."/>
            <person name="Nordsiek G."/>
            <person name="Pearce A.V."/>
            <person name="Peck A.I."/>
            <person name="Porter K.M."/>
            <person name="Pandian R."/>
            <person name="Pelan S."/>
            <person name="Phillimore B."/>
            <person name="Povey S."/>
            <person name="Ramsey Y."/>
            <person name="Rand V."/>
            <person name="Scharfe M."/>
            <person name="Sehra H.K."/>
            <person name="Shownkeen R."/>
            <person name="Sims S.K."/>
            <person name="Skuce C.D."/>
            <person name="Smith M."/>
            <person name="Steward C.A."/>
            <person name="Swarbreck D."/>
            <person name="Sycamore N."/>
            <person name="Tester J."/>
            <person name="Thorpe A."/>
            <person name="Tracey A."/>
            <person name="Tromans A."/>
            <person name="Thomas D.W."/>
            <person name="Wall M."/>
            <person name="Wallis J.M."/>
            <person name="West A.P."/>
            <person name="Whitehead S.L."/>
            <person name="Willey D.L."/>
            <person name="Williams S.A."/>
            <person name="Wilming L."/>
            <person name="Wray P.W."/>
            <person name="Young L."/>
            <person name="Ashurst J.L."/>
            <person name="Coulson A."/>
            <person name="Blocker H."/>
            <person name="Durbin R.M."/>
            <person name="Sulston J.E."/>
            <person name="Hubbard T."/>
            <person name="Jackson M.J."/>
            <person name="Bentley D.R."/>
            <person name="Beck S."/>
            <person name="Rogers J."/>
            <person name="Dunham I."/>
        </authorList>
    </citation>
    <scope>NUCLEOTIDE SEQUENCE [LARGE SCALE GENOMIC DNA]</scope>
</reference>
<reference key="5">
    <citation type="journal article" date="2004" name="Genome Res.">
        <title>The status, quality, and expansion of the NIH full-length cDNA project: the Mammalian Gene Collection (MGC).</title>
        <authorList>
            <consortium name="The MGC Project Team"/>
        </authorList>
    </citation>
    <scope>NUCLEOTIDE SEQUENCE [LARGE SCALE MRNA] (ISOFORM 1)</scope>
    <source>
        <tissue>Lymph</tissue>
    </source>
</reference>
<reference key="6">
    <citation type="journal article" date="2011" name="BMC Syst. Biol.">
        <title>Initial characterization of the human central proteome.</title>
        <authorList>
            <person name="Burkard T.R."/>
            <person name="Planyavsky M."/>
            <person name="Kaupe I."/>
            <person name="Breitwieser F.P."/>
            <person name="Buerckstuemmer T."/>
            <person name="Bennett K.L."/>
            <person name="Superti-Furga G."/>
            <person name="Colinge J."/>
        </authorList>
    </citation>
    <scope>IDENTIFICATION BY MASS SPECTROMETRY [LARGE SCALE ANALYSIS]</scope>
</reference>
<reference key="7">
    <citation type="journal article" date="2012" name="Proc. Natl. Acad. Sci. U.S.A.">
        <title>N-terminal acetylome analyses and functional insights of the N-terminal acetyltransferase NatB.</title>
        <authorList>
            <person name="Van Damme P."/>
            <person name="Lasa M."/>
            <person name="Polevoda B."/>
            <person name="Gazquez C."/>
            <person name="Elosegui-Artola A."/>
            <person name="Kim D.S."/>
            <person name="De Juan-Pardo E."/>
            <person name="Demeyer K."/>
            <person name="Hole K."/>
            <person name="Larrea E."/>
            <person name="Timmerman E."/>
            <person name="Prieto J."/>
            <person name="Arnesen T."/>
            <person name="Sherman F."/>
            <person name="Gevaert K."/>
            <person name="Aldabe R."/>
        </authorList>
    </citation>
    <scope>ACETYLATION [LARGE SCALE ANALYSIS] AT MET-1</scope>
    <scope>IDENTIFICATION BY MASS SPECTROMETRY [LARGE SCALE ANALYSIS]</scope>
</reference>
<reference key="8">
    <citation type="journal article" date="2013" name="J. Proteome Res.">
        <title>Toward a comprehensive characterization of a human cancer cell phosphoproteome.</title>
        <authorList>
            <person name="Zhou H."/>
            <person name="Di Palma S."/>
            <person name="Preisinger C."/>
            <person name="Peng M."/>
            <person name="Polat A.N."/>
            <person name="Heck A.J."/>
            <person name="Mohammed S."/>
        </authorList>
    </citation>
    <scope>PHOSPHORYLATION [LARGE SCALE ANALYSIS] AT SER-10</scope>
    <scope>IDENTIFICATION BY MASS SPECTROMETRY [LARGE SCALE ANALYSIS]</scope>
    <source>
        <tissue>Erythroleukemia</tissue>
    </source>
</reference>
<keyword id="KW-0007">Acetylation</keyword>
<keyword id="KW-0025">Alternative splicing</keyword>
<keyword id="KW-0175">Coiled coil</keyword>
<keyword id="KW-0963">Cytoplasm</keyword>
<keyword id="KW-0597">Phosphoprotein</keyword>
<keyword id="KW-1267">Proteomics identification</keyword>
<keyword id="KW-1185">Reference proteome</keyword>
<keyword id="KW-0728">SH3 domain</keyword>
<accession>Q9NR46</accession>
<accession>A6NC47</accession>
<accession>A8MPS4</accession>
<accession>Q8WY61</accession>
<accession>Q96JH9</accession>
<organism>
    <name type="scientific">Homo sapiens</name>
    <name type="common">Human</name>
    <dbReference type="NCBI Taxonomy" id="9606"/>
    <lineage>
        <taxon>Eukaryota</taxon>
        <taxon>Metazoa</taxon>
        <taxon>Chordata</taxon>
        <taxon>Craniata</taxon>
        <taxon>Vertebrata</taxon>
        <taxon>Euteleostomi</taxon>
        <taxon>Mammalia</taxon>
        <taxon>Eutheria</taxon>
        <taxon>Euarchontoglires</taxon>
        <taxon>Primates</taxon>
        <taxon>Haplorrhini</taxon>
        <taxon>Catarrhini</taxon>
        <taxon>Hominidae</taxon>
        <taxon>Homo</taxon>
    </lineage>
</organism>
<protein>
    <recommendedName>
        <fullName>Endophilin-B2</fullName>
    </recommendedName>
    <alternativeName>
        <fullName>SH3 domain-containing GRB2-like protein B2</fullName>
    </alternativeName>
</protein>
<evidence type="ECO:0000250" key="1"/>
<evidence type="ECO:0000250" key="2">
    <source>
        <dbReference type="UniProtKB" id="Q5PPJ9"/>
    </source>
</evidence>
<evidence type="ECO:0000255" key="3"/>
<evidence type="ECO:0000255" key="4">
    <source>
        <dbReference type="PROSITE-ProRule" id="PRU00192"/>
    </source>
</evidence>
<evidence type="ECO:0000255" key="5">
    <source>
        <dbReference type="PROSITE-ProRule" id="PRU00361"/>
    </source>
</evidence>
<evidence type="ECO:0000269" key="6">
    <source>
    </source>
</evidence>
<evidence type="ECO:0000303" key="7">
    <source>
    </source>
</evidence>
<evidence type="ECO:0000305" key="8"/>
<evidence type="ECO:0007744" key="9">
    <source>
    </source>
</evidence>
<evidence type="ECO:0007744" key="10">
    <source>
    </source>
</evidence>
<name>SHLB2_HUMAN</name>
<proteinExistence type="evidence at protein level"/>
<gene>
    <name type="primary">SH3GLB2</name>
    <name type="synonym">KIAA1848</name>
    <name type="ORF">PP578</name>
</gene>
<sequence>MDFNMKKLASDAGIFFTRAVQFTEEKFGQAEKTELDAHFENLLARADSTKNWTEKILRQTEVLLQPNPSARVEEFLYEKLDRKVPSRVTNGELLAQYMADAASELGPTTPYGKTLIKVAEAEKQLGAAERDFIHTASISFLTPLRNFLEGDWKTISKERRLLQNRRLDLDACKARLKKAKAAEAKATTVPDFQETRPRNYILSASASALWNDEVDKAEQELRVAQTEFDRQAEVTRLLLEGISSTHVNHLRCLHEFVKSQTTYYAQCYRHMLDLQKQLGRFPGTFVGTTEPASPPLSSTSPTTAAATMPVVPSVASLAPPGEASLCLEEVAPPASGTRKARVLYDYEAADSSELALLADELITVYSLPGMDPDWLIGERGNKKGKVPVTYLELLS</sequence>
<feature type="chain" id="PRO_0000146755" description="Endophilin-B2">
    <location>
        <begin position="1"/>
        <end position="395"/>
    </location>
</feature>
<feature type="domain" description="BAR" evidence="5">
    <location>
        <begin position="24"/>
        <end position="287"/>
    </location>
</feature>
<feature type="domain" description="SH3" evidence="4">
    <location>
        <begin position="335"/>
        <end position="395"/>
    </location>
</feature>
<feature type="region of interest" description="Membrane-binding amphipathic helix" evidence="1">
    <location>
        <begin position="1"/>
        <end position="27"/>
    </location>
</feature>
<feature type="coiled-coil region" evidence="3">
    <location>
        <begin position="116"/>
        <end position="132"/>
    </location>
</feature>
<feature type="coiled-coil region" evidence="3">
    <location>
        <begin position="206"/>
        <end position="240"/>
    </location>
</feature>
<feature type="modified residue" description="N-acetylmethionine" evidence="9">
    <location>
        <position position="1"/>
    </location>
</feature>
<feature type="modified residue" description="Phosphoserine" evidence="10">
    <location>
        <position position="10"/>
    </location>
</feature>
<feature type="modified residue" description="Phosphoserine" evidence="2">
    <location>
        <position position="395"/>
    </location>
</feature>
<feature type="splice variant" id="VSP_009278" description="In isoform 2." evidence="7">
    <original>T</original>
    <variation>TCEGD</variation>
    <location>
        <position position="187"/>
    </location>
</feature>
<feature type="splice variant" id="VSP_009279" description="In isoform 2." evidence="7">
    <original>R</original>
    <variation>SSQGAI</variation>
    <location>
        <position position="280"/>
    </location>
</feature>
<feature type="sequence variant" id="VAR_053078" description="In dbSNP:rs17455482.">
    <original>A</original>
    <variation>V</variation>
    <location>
        <position position="305"/>
    </location>
</feature>
<feature type="sequence variant" id="VAR_053079" description="In dbSNP:rs17455475.">
    <original>P</original>
    <variation>L</variation>
    <location>
        <position position="319"/>
    </location>
</feature>
<comment type="subunit">
    <text>Homodimer, and heterodimer with SH3GLB1.</text>
</comment>
<comment type="interaction">
    <interactant intactId="EBI-749607">
        <id>Q9NR46</id>
    </interactant>
    <interactant intactId="EBI-718729">
        <id>P55212</id>
        <label>CASP6</label>
    </interactant>
    <organismsDiffer>false</organismsDiffer>
    <experiments>3</experiments>
</comment>
<comment type="interaction">
    <interactant intactId="EBI-749607">
        <id>Q9NR46</id>
    </interactant>
    <interactant intactId="EBI-743105">
        <id>Q5JVL4</id>
        <label>EFHC1</label>
    </interactant>
    <organismsDiffer>false</organismsDiffer>
    <experiments>3</experiments>
</comment>
<comment type="interaction">
    <interactant intactId="EBI-749607">
        <id>Q9NR46</id>
    </interactant>
    <interactant intactId="EBI-517086">
        <id>O43464</id>
        <label>HTRA2</label>
    </interactant>
    <organismsDiffer>false</organismsDiffer>
    <experiments>3</experiments>
</comment>
<comment type="interaction">
    <interactant intactId="EBI-749607">
        <id>Q9NR46</id>
    </interactant>
    <interactant intactId="EBI-466029">
        <id>P42858</id>
        <label>HTT</label>
    </interactant>
    <organismsDiffer>false</organismsDiffer>
    <experiments>3</experiments>
</comment>
<comment type="interaction">
    <interactant intactId="EBI-749607">
        <id>Q9NR46</id>
    </interactant>
    <interactant intactId="EBI-10171774">
        <id>P60410</id>
        <label>KRTAP10-8</label>
    </interactant>
    <organismsDiffer>false</organismsDiffer>
    <experiments>3</experiments>
</comment>
<comment type="interaction">
    <interactant intactId="EBI-749607">
        <id>Q9NR46</id>
    </interactant>
    <interactant intactId="EBI-11993254">
        <id>Q9BYR2</id>
        <label>KRTAP4-5</label>
    </interactant>
    <organismsDiffer>false</organismsDiffer>
    <experiments>3</experiments>
</comment>
<comment type="interaction">
    <interactant intactId="EBI-749607">
        <id>Q9NR46</id>
    </interactant>
    <interactant intactId="EBI-11993296">
        <id>Q6L8G4</id>
        <label>KRTAP5-11</label>
    </interactant>
    <organismsDiffer>false</organismsDiffer>
    <experiments>3</experiments>
</comment>
<comment type="interaction">
    <interactant intactId="EBI-749607">
        <id>Q9NR46</id>
    </interactant>
    <interactant intactId="EBI-1043191">
        <id>Q9BYQ3</id>
        <label>KRTAP9-3</label>
    </interactant>
    <organismsDiffer>false</organismsDiffer>
    <experiments>3</experiments>
</comment>
<comment type="interaction">
    <interactant intactId="EBI-749607">
        <id>Q9NR46</id>
    </interactant>
    <interactant intactId="EBI-21591415">
        <id>P13473-2</id>
        <label>LAMP2</label>
    </interactant>
    <organismsDiffer>false</organismsDiffer>
    <experiments>3</experiments>
</comment>
<comment type="interaction">
    <interactant intactId="EBI-749607">
        <id>Q9NR46</id>
    </interactant>
    <interactant intactId="EBI-10274069">
        <id>Q8TCE9</id>
        <label>LGALS14</label>
    </interactant>
    <organismsDiffer>false</organismsDiffer>
    <experiments>3</experiments>
</comment>
<comment type="interaction">
    <interactant intactId="EBI-749607">
        <id>Q9NR46</id>
    </interactant>
    <interactant intactId="EBI-740978">
        <id>P43355</id>
        <label>MAGEA1</label>
    </interactant>
    <organismsDiffer>false</organismsDiffer>
    <experiments>3</experiments>
</comment>
<comment type="interaction">
    <interactant intactId="EBI-749607">
        <id>Q9NR46</id>
    </interactant>
    <interactant intactId="EBI-741158">
        <id>Q96HA8</id>
        <label>NTAQ1</label>
    </interactant>
    <organismsDiffer>false</organismsDiffer>
    <experiments>3</experiments>
</comment>
<comment type="interaction">
    <interactant intactId="EBI-749607">
        <id>Q9NR46</id>
    </interactant>
    <interactant intactId="EBI-398874">
        <id>Q9UBU9</id>
        <label>NXF1</label>
    </interactant>
    <organismsDiffer>false</organismsDiffer>
    <experiments>3</experiments>
</comment>
<comment type="interaction">
    <interactant intactId="EBI-749607">
        <id>Q9NR46</id>
    </interactant>
    <interactant intactId="EBI-79165">
        <id>Q9NRD5</id>
        <label>PICK1</label>
    </interactant>
    <organismsDiffer>false</organismsDiffer>
    <experiments>3</experiments>
</comment>
<comment type="interaction">
    <interactant intactId="EBI-749607">
        <id>Q9NR46</id>
    </interactant>
    <interactant intactId="EBI-2623095">
        <id>Q9Y371</id>
        <label>SH3GLB1</label>
    </interactant>
    <organismsDiffer>false</organismsDiffer>
    <experiments>23</experiments>
</comment>
<comment type="interaction">
    <interactant intactId="EBI-749607">
        <id>Q9NR46</id>
    </interactant>
    <interactant intactId="EBI-749607">
        <id>Q9NR46</id>
        <label>SH3GLB2</label>
    </interactant>
    <organismsDiffer>false</organismsDiffer>
    <experiments>3</experiments>
</comment>
<comment type="interaction">
    <interactant intactId="EBI-749607">
        <id>Q9NR46</id>
    </interactant>
    <interactant intactId="EBI-3258000">
        <id>Q9P0N9</id>
        <label>TBC1D7</label>
    </interactant>
    <organismsDiffer>false</organismsDiffer>
    <experiments>3</experiments>
</comment>
<comment type="interaction">
    <interactant intactId="EBI-749607">
        <id>Q9NR46</id>
    </interactant>
    <interactant intactId="EBI-515331">
        <id>P07947</id>
        <label>YES1</label>
    </interactant>
    <organismsDiffer>false</organismsDiffer>
    <experiments>3</experiments>
</comment>
<comment type="subcellular location">
    <subcellularLocation>
        <location evidence="6">Cytoplasm</location>
    </subcellularLocation>
</comment>
<comment type="alternative products">
    <event type="alternative splicing"/>
    <isoform>
        <id>Q9NR46-1</id>
        <name>1</name>
        <sequence type="displayed"/>
    </isoform>
    <isoform>
        <id>Q9NR46-2</id>
        <name>2</name>
        <sequence type="described" ref="VSP_009278 VSP_009279"/>
    </isoform>
</comment>
<comment type="tissue specificity">
    <text evidence="6">Detected in skeletal muscle, adipocyte, brain, lung, colon and mammary gland.</text>
</comment>
<comment type="similarity">
    <text evidence="8">Belongs to the endophilin family.</text>
</comment>
<comment type="sequence caution" evidence="8">
    <conflict type="frameshift">
        <sequence resource="EMBL-CDS" id="AAG23792"/>
    </conflict>
</comment>
<comment type="sequence caution" evidence="8">
    <conflict type="erroneous initiation">
        <sequence resource="EMBL-CDS" id="BAB47477"/>
    </conflict>
</comment>
<dbReference type="EMBL" id="AF257319">
    <property type="protein sequence ID" value="AAF81226.1"/>
    <property type="molecule type" value="mRNA"/>
</dbReference>
<dbReference type="EMBL" id="AB058751">
    <property type="protein sequence ID" value="BAB47477.2"/>
    <property type="status" value="ALT_INIT"/>
    <property type="molecule type" value="mRNA"/>
</dbReference>
<dbReference type="EMBL" id="AF258589">
    <property type="protein sequence ID" value="AAG23792.1"/>
    <property type="status" value="ALT_FRAME"/>
    <property type="molecule type" value="mRNA"/>
</dbReference>
<dbReference type="EMBL" id="AL592211">
    <property type="status" value="NOT_ANNOTATED_CDS"/>
    <property type="molecule type" value="Genomic_DNA"/>
</dbReference>
<dbReference type="EMBL" id="BC014635">
    <property type="protein sequence ID" value="AAH14635.1"/>
    <property type="molecule type" value="mRNA"/>
</dbReference>
<dbReference type="CCDS" id="CCDS6916.1">
    <molecule id="Q9NR46-1"/>
</dbReference>
<dbReference type="CCDS" id="CCDS69680.1">
    <molecule id="Q9NR46-2"/>
</dbReference>
<dbReference type="RefSeq" id="NP_001273974.1">
    <molecule id="Q9NR46-2"/>
    <property type="nucleotide sequence ID" value="NM_001287045.2"/>
</dbReference>
<dbReference type="RefSeq" id="NP_001273975.1">
    <molecule id="Q9NR46-1"/>
    <property type="nucleotide sequence ID" value="NM_001287046.2"/>
</dbReference>
<dbReference type="RefSeq" id="NP_064530.1">
    <molecule id="Q9NR46-1"/>
    <property type="nucleotide sequence ID" value="NM_020145.4"/>
</dbReference>
<dbReference type="RefSeq" id="XP_005252158.1">
    <property type="nucleotide sequence ID" value="XM_005252101.3"/>
</dbReference>
<dbReference type="SMR" id="Q9NR46"/>
<dbReference type="BioGRID" id="121234">
    <property type="interactions" value="110"/>
</dbReference>
<dbReference type="FunCoup" id="Q9NR46">
    <property type="interactions" value="1678"/>
</dbReference>
<dbReference type="IntAct" id="Q9NR46">
    <property type="interactions" value="60"/>
</dbReference>
<dbReference type="MINT" id="Q9NR46"/>
<dbReference type="STRING" id="9606.ENSP00000361634"/>
<dbReference type="GlyGen" id="Q9NR46">
    <property type="glycosylation" value="1 site, 1 O-linked glycan (1 site)"/>
</dbReference>
<dbReference type="iPTMnet" id="Q9NR46"/>
<dbReference type="PhosphoSitePlus" id="Q9NR46"/>
<dbReference type="BioMuta" id="SH3GLB2"/>
<dbReference type="DMDM" id="41018150"/>
<dbReference type="jPOST" id="Q9NR46"/>
<dbReference type="MassIVE" id="Q9NR46"/>
<dbReference type="PaxDb" id="9606-ENSP00000361634"/>
<dbReference type="PeptideAtlas" id="Q9NR46"/>
<dbReference type="ProteomicsDB" id="82271">
    <molecule id="Q9NR46-1"/>
</dbReference>
<dbReference type="ProteomicsDB" id="82272">
    <molecule id="Q9NR46-2"/>
</dbReference>
<dbReference type="Pumba" id="Q9NR46"/>
<dbReference type="TopDownProteomics" id="Q9NR46-1">
    <molecule id="Q9NR46-1"/>
</dbReference>
<dbReference type="ABCD" id="Q9NR46">
    <property type="antibodies" value="1 sequenced antibody"/>
</dbReference>
<dbReference type="Antibodypedia" id="17774">
    <property type="antibodies" value="141 antibodies from 24 providers"/>
</dbReference>
<dbReference type="DNASU" id="56904"/>
<dbReference type="Ensembl" id="ENST00000372554.8">
    <molecule id="Q9NR46-2"/>
    <property type="protein sequence ID" value="ENSP00000361634.4"/>
    <property type="gene ID" value="ENSG00000148341.18"/>
</dbReference>
<dbReference type="Ensembl" id="ENST00000372559.5">
    <molecule id="Q9NR46-1"/>
    <property type="protein sequence ID" value="ENSP00000361640.1"/>
    <property type="gene ID" value="ENSG00000148341.18"/>
</dbReference>
<dbReference type="Ensembl" id="ENST00000372564.8">
    <molecule id="Q9NR46-1"/>
    <property type="protein sequence ID" value="ENSP00000361645.3"/>
    <property type="gene ID" value="ENSG00000148341.18"/>
</dbReference>
<dbReference type="GeneID" id="56904"/>
<dbReference type="KEGG" id="hsa:56904"/>
<dbReference type="MANE-Select" id="ENST00000372564.8">
    <property type="protein sequence ID" value="ENSP00000361645.3"/>
    <property type="RefSeq nucleotide sequence ID" value="NM_020145.4"/>
    <property type="RefSeq protein sequence ID" value="NP_064530.1"/>
</dbReference>
<dbReference type="UCSC" id="uc004bwv.5">
    <molecule id="Q9NR46-1"/>
    <property type="organism name" value="human"/>
</dbReference>
<dbReference type="AGR" id="HGNC:10834"/>
<dbReference type="CTD" id="56904"/>
<dbReference type="DisGeNET" id="56904"/>
<dbReference type="GeneCards" id="SH3GLB2"/>
<dbReference type="HGNC" id="HGNC:10834">
    <property type="gene designation" value="SH3GLB2"/>
</dbReference>
<dbReference type="HPA" id="ENSG00000148341">
    <property type="expression patterns" value="Low tissue specificity"/>
</dbReference>
<dbReference type="MIM" id="609288">
    <property type="type" value="gene"/>
</dbReference>
<dbReference type="neXtProt" id="NX_Q9NR46"/>
<dbReference type="OpenTargets" id="ENSG00000148341"/>
<dbReference type="PharmGKB" id="PA35740"/>
<dbReference type="VEuPathDB" id="HostDB:ENSG00000148341"/>
<dbReference type="eggNOG" id="KOG3725">
    <property type="taxonomic scope" value="Eukaryota"/>
</dbReference>
<dbReference type="GeneTree" id="ENSGT00940000155841"/>
<dbReference type="InParanoid" id="Q9NR46"/>
<dbReference type="OMA" id="DWIMAER"/>
<dbReference type="OrthoDB" id="14167at2759"/>
<dbReference type="PAN-GO" id="Q9NR46">
    <property type="GO annotations" value="2 GO annotations based on evolutionary models"/>
</dbReference>
<dbReference type="PhylomeDB" id="Q9NR46"/>
<dbReference type="TreeFam" id="TF313281"/>
<dbReference type="PathwayCommons" id="Q9NR46"/>
<dbReference type="SignaLink" id="Q9NR46"/>
<dbReference type="SIGNOR" id="Q9NR46"/>
<dbReference type="BioGRID-ORCS" id="56904">
    <property type="hits" value="6 hits in 1155 CRISPR screens"/>
</dbReference>
<dbReference type="CD-CODE" id="91857CE7">
    <property type="entry name" value="Nucleolus"/>
</dbReference>
<dbReference type="CD-CODE" id="FB4E32DD">
    <property type="entry name" value="Presynaptic clusters and postsynaptic densities"/>
</dbReference>
<dbReference type="ChiTaRS" id="SH3GLB2">
    <property type="organism name" value="human"/>
</dbReference>
<dbReference type="GeneWiki" id="SH3GLB2"/>
<dbReference type="GenomeRNAi" id="56904"/>
<dbReference type="Pharos" id="Q9NR46">
    <property type="development level" value="Tbio"/>
</dbReference>
<dbReference type="PRO" id="PR:Q9NR46"/>
<dbReference type="Proteomes" id="UP000005640">
    <property type="component" value="Chromosome 9"/>
</dbReference>
<dbReference type="RNAct" id="Q9NR46">
    <property type="molecule type" value="protein"/>
</dbReference>
<dbReference type="Bgee" id="ENSG00000148341">
    <property type="expression patterns" value="Expressed in adenohypophysis and 179 other cell types or tissues"/>
</dbReference>
<dbReference type="ExpressionAtlas" id="Q9NR46">
    <property type="expression patterns" value="baseline and differential"/>
</dbReference>
<dbReference type="GO" id="GO:0005737">
    <property type="term" value="C:cytoplasm"/>
    <property type="evidence" value="ECO:0000314"/>
    <property type="project" value="HGNC-UCL"/>
</dbReference>
<dbReference type="GO" id="GO:0005829">
    <property type="term" value="C:cytosol"/>
    <property type="evidence" value="ECO:0000314"/>
    <property type="project" value="HPA"/>
</dbReference>
<dbReference type="GO" id="GO:0016020">
    <property type="term" value="C:membrane"/>
    <property type="evidence" value="ECO:0000318"/>
    <property type="project" value="GO_Central"/>
</dbReference>
<dbReference type="GO" id="GO:0005654">
    <property type="term" value="C:nucleoplasm"/>
    <property type="evidence" value="ECO:0000314"/>
    <property type="project" value="HPA"/>
</dbReference>
<dbReference type="GO" id="GO:0045296">
    <property type="term" value="F:cadherin binding"/>
    <property type="evidence" value="ECO:0007005"/>
    <property type="project" value="BHF-UCL"/>
</dbReference>
<dbReference type="GO" id="GO:0042802">
    <property type="term" value="F:identical protein binding"/>
    <property type="evidence" value="ECO:0000353"/>
    <property type="project" value="IntAct"/>
</dbReference>
<dbReference type="GO" id="GO:0061024">
    <property type="term" value="P:membrane organization"/>
    <property type="evidence" value="ECO:0000318"/>
    <property type="project" value="GO_Central"/>
</dbReference>
<dbReference type="CDD" id="cd07617">
    <property type="entry name" value="BAR_Endophilin_B2"/>
    <property type="match status" value="1"/>
</dbReference>
<dbReference type="CDD" id="cd11944">
    <property type="entry name" value="SH3_Endophilin_B2"/>
    <property type="match status" value="1"/>
</dbReference>
<dbReference type="FunFam" id="1.20.1270.60:FF:000017">
    <property type="entry name" value="endophilin-B2 isoform X1"/>
    <property type="match status" value="1"/>
</dbReference>
<dbReference type="FunFam" id="2.30.30.40:FF:000028">
    <property type="entry name" value="endophilin-B2 isoform X1"/>
    <property type="match status" value="1"/>
</dbReference>
<dbReference type="Gene3D" id="1.20.1270.60">
    <property type="entry name" value="Arfaptin homology (AH) domain/BAR domain"/>
    <property type="match status" value="1"/>
</dbReference>
<dbReference type="Gene3D" id="2.30.30.40">
    <property type="entry name" value="SH3 Domains"/>
    <property type="match status" value="1"/>
</dbReference>
<dbReference type="InterPro" id="IPR027267">
    <property type="entry name" value="AH/BAR_dom_sf"/>
</dbReference>
<dbReference type="InterPro" id="IPR004148">
    <property type="entry name" value="BAR_dom"/>
</dbReference>
<dbReference type="InterPro" id="IPR035640">
    <property type="entry name" value="Endophilin_B2_SH3"/>
</dbReference>
<dbReference type="InterPro" id="IPR050384">
    <property type="entry name" value="Endophilin_SH3RF"/>
</dbReference>
<dbReference type="InterPro" id="IPR036028">
    <property type="entry name" value="SH3-like_dom_sf"/>
</dbReference>
<dbReference type="InterPro" id="IPR001452">
    <property type="entry name" value="SH3_domain"/>
</dbReference>
<dbReference type="PANTHER" id="PTHR14167:SF68">
    <property type="entry name" value="DREBRIN-LIKE PROTEIN-RELATED"/>
    <property type="match status" value="1"/>
</dbReference>
<dbReference type="PANTHER" id="PTHR14167">
    <property type="entry name" value="SH3 DOMAIN-CONTAINING"/>
    <property type="match status" value="1"/>
</dbReference>
<dbReference type="Pfam" id="PF03114">
    <property type="entry name" value="BAR"/>
    <property type="match status" value="1"/>
</dbReference>
<dbReference type="Pfam" id="PF14604">
    <property type="entry name" value="SH3_9"/>
    <property type="match status" value="1"/>
</dbReference>
<dbReference type="SMART" id="SM00721">
    <property type="entry name" value="BAR"/>
    <property type="match status" value="1"/>
</dbReference>
<dbReference type="SMART" id="SM00326">
    <property type="entry name" value="SH3"/>
    <property type="match status" value="1"/>
</dbReference>
<dbReference type="SUPFAM" id="SSF103657">
    <property type="entry name" value="BAR/IMD domain-like"/>
    <property type="match status" value="1"/>
</dbReference>
<dbReference type="SUPFAM" id="SSF50044">
    <property type="entry name" value="SH3-domain"/>
    <property type="match status" value="1"/>
</dbReference>
<dbReference type="PROSITE" id="PS51021">
    <property type="entry name" value="BAR"/>
    <property type="match status" value="1"/>
</dbReference>
<dbReference type="PROSITE" id="PS50002">
    <property type="entry name" value="SH3"/>
    <property type="match status" value="1"/>
</dbReference>